<organism>
    <name type="scientific">Mycoplasma pneumoniae (strain ATCC 29342 / M129 / Subtype 1)</name>
    <name type="common">Mycoplasmoides pneumoniae</name>
    <dbReference type="NCBI Taxonomy" id="272634"/>
    <lineage>
        <taxon>Bacteria</taxon>
        <taxon>Bacillati</taxon>
        <taxon>Mycoplasmatota</taxon>
        <taxon>Mycoplasmoidales</taxon>
        <taxon>Mycoplasmoidaceae</taxon>
        <taxon>Mycoplasmoides</taxon>
    </lineage>
</organism>
<sequence length="251" mass="29048">MQRTLNVGVILCESFISNAQNPVNSYIKIYENVRMFEFAIKLLQESRINFQKILLYVLEEQIPLVEKVVAKYENCWVFRSKHNEVEDIYEAKGFIEDKYKIGLKSSKNQASSYYDNCCFVVLEACRPLTSKKVVKNVYEKAMIDGAAVAVLPFERQLVCGDNTKAVRQLKDKGNMNYWRQSSTWELQFPQAYTLNKLNQYHKNLFMKARNMLDLMNISAKNPLSIVDGSAYSFRVVTSLDFEILLGILRNG</sequence>
<name>Y255_MYCPN</name>
<feature type="chain" id="PRO_0000210420" description="Uncharacterized protein MG116 homolog">
    <location>
        <begin position="1"/>
        <end position="251"/>
    </location>
</feature>
<dbReference type="EMBL" id="U00089">
    <property type="protein sequence ID" value="AAB96226.1"/>
    <property type="molecule type" value="Genomic_DNA"/>
</dbReference>
<dbReference type="PIR" id="S73904">
    <property type="entry name" value="S73904"/>
</dbReference>
<dbReference type="RefSeq" id="NP_109943.1">
    <property type="nucleotide sequence ID" value="NC_000912.1"/>
</dbReference>
<dbReference type="RefSeq" id="WP_010874612.1">
    <property type="nucleotide sequence ID" value="NZ_OU342337.1"/>
</dbReference>
<dbReference type="SMR" id="P75519"/>
<dbReference type="STRING" id="272634.MPN_255"/>
<dbReference type="EnsemblBacteria" id="AAB96226">
    <property type="protein sequence ID" value="AAB96226"/>
    <property type="gene ID" value="MPN_255"/>
</dbReference>
<dbReference type="KEGG" id="mpn:MPN_255"/>
<dbReference type="PATRIC" id="fig|272634.6.peg.274"/>
<dbReference type="HOGENOM" id="CLU_1106195_0_0_14"/>
<dbReference type="OrthoDB" id="9806837at2"/>
<dbReference type="BioCyc" id="MPNE272634:G1GJ3-402-MONOMER"/>
<dbReference type="Proteomes" id="UP000000808">
    <property type="component" value="Chromosome"/>
</dbReference>
<dbReference type="Gene3D" id="3.90.550.10">
    <property type="entry name" value="Spore Coat Polysaccharide Biosynthesis Protein SpsA, Chain A"/>
    <property type="match status" value="1"/>
</dbReference>
<dbReference type="InterPro" id="IPR029044">
    <property type="entry name" value="Nucleotide-diphossugar_trans"/>
</dbReference>
<dbReference type="SUPFAM" id="SSF53448">
    <property type="entry name" value="Nucleotide-diphospho-sugar transferases"/>
    <property type="match status" value="1"/>
</dbReference>
<protein>
    <recommendedName>
        <fullName>Uncharacterized protein MG116 homolog</fullName>
    </recommendedName>
</protein>
<proteinExistence type="predicted"/>
<accession>P75519</accession>
<reference key="1">
    <citation type="journal article" date="1996" name="Nucleic Acids Res.">
        <title>Complete sequence analysis of the genome of the bacterium Mycoplasma pneumoniae.</title>
        <authorList>
            <person name="Himmelreich R."/>
            <person name="Hilbert H."/>
            <person name="Plagens H."/>
            <person name="Pirkl E."/>
            <person name="Li B.-C."/>
            <person name="Herrmann R."/>
        </authorList>
    </citation>
    <scope>NUCLEOTIDE SEQUENCE [LARGE SCALE GENOMIC DNA]</scope>
    <source>
        <strain>ATCC 29342 / M129 / Subtype 1</strain>
    </source>
</reference>
<keyword id="KW-1185">Reference proteome</keyword>
<gene>
    <name type="ordered locus">MPN_255</name>
    <name type="ORF">A65_orf251b</name>
    <name type="ORF">MP578</name>
</gene>